<comment type="function">
    <text evidence="2 3 4">Catalyzes the conversion of allantoin (5-ureidohydantoin) to allantoate by hydrolytic cleavage of the five-member hydantoin ring. Catalyzes the first step of the ureide allantoin degradation followed by the sequential activity of AAH, UGLYAH and UAH which allows a complete purine breakdown without the intermediate generation of urea.</text>
</comment>
<comment type="catalytic activity">
    <reaction evidence="4">
        <text>(S)-allantoin + H2O = allantoate + H(+)</text>
        <dbReference type="Rhea" id="RHEA:17029"/>
        <dbReference type="ChEBI" id="CHEBI:15377"/>
        <dbReference type="ChEBI" id="CHEBI:15378"/>
        <dbReference type="ChEBI" id="CHEBI:15678"/>
        <dbReference type="ChEBI" id="CHEBI:17536"/>
        <dbReference type="EC" id="3.5.2.5"/>
    </reaction>
</comment>
<comment type="cofactor">
    <cofactor evidence="1">
        <name>Zn(2+)</name>
        <dbReference type="ChEBI" id="CHEBI:29105"/>
    </cofactor>
    <text evidence="1">Binds 2 Zn(2+) ions per subunit.</text>
</comment>
<comment type="biophysicochemical properties">
    <kinetics>
        <KM evidence="4">5.47 mM for allantoin</KM>
    </kinetics>
</comment>
<comment type="pathway">
    <text>Nitrogen metabolism; (S)-allantoin degradation; allantoate from (S)-allantoin: step 1/1.</text>
</comment>
<comment type="subunit">
    <text evidence="1">Homotetramer.</text>
</comment>
<comment type="PTM">
    <text evidence="1">Carboxylation allows a single lysine to coordinate two zinc ions.</text>
</comment>
<comment type="disruption phenotype">
    <text evidence="3 4 5">No visible phenotype under normal growth conditions, but mutant plants are unable to grow on a medium containing allantoin as the sole nitrogen source, accumulate allantoin and have increased tolerance to drought and osmotic stresses.</text>
</comment>
<comment type="miscellaneous">
    <text evidence="7">In Arabidopsis the intermediary metabolite allantoin plays a role in abiotic stress tolerance via activation of abscisic acid (ABA) metabolism.</text>
</comment>
<comment type="similarity">
    <text evidence="6">Belongs to the metallo-dependent hydrolases superfamily. Allantoinase family.</text>
</comment>
<feature type="chain" id="PRO_0000430041" description="Allantoinase">
    <location>
        <begin position="1"/>
        <end position="506"/>
    </location>
</feature>
<feature type="binding site" evidence="1">
    <location>
        <position position="105"/>
    </location>
    <ligand>
        <name>Zn(2+)</name>
        <dbReference type="ChEBI" id="CHEBI:29105"/>
        <label>1</label>
    </ligand>
</feature>
<feature type="binding site" evidence="1">
    <location>
        <position position="107"/>
    </location>
    <ligand>
        <name>Zn(2+)</name>
        <dbReference type="ChEBI" id="CHEBI:29105"/>
        <label>1</label>
    </ligand>
</feature>
<feature type="binding site" description="via carbamate group" evidence="1">
    <location>
        <position position="195"/>
    </location>
    <ligand>
        <name>Zn(2+)</name>
        <dbReference type="ChEBI" id="CHEBI:29105"/>
        <label>1</label>
    </ligand>
</feature>
<feature type="binding site" description="via carbamate group" evidence="1">
    <location>
        <position position="195"/>
    </location>
    <ligand>
        <name>Zn(2+)</name>
        <dbReference type="ChEBI" id="CHEBI:29105"/>
        <label>2</label>
    </ligand>
</feature>
<feature type="binding site" evidence="1">
    <location>
        <position position="231"/>
    </location>
    <ligand>
        <name>Zn(2+)</name>
        <dbReference type="ChEBI" id="CHEBI:29105"/>
        <label>2</label>
    </ligand>
</feature>
<feature type="binding site" evidence="1">
    <location>
        <position position="292"/>
    </location>
    <ligand>
        <name>Zn(2+)</name>
        <dbReference type="ChEBI" id="CHEBI:29105"/>
        <label>2</label>
    </ligand>
</feature>
<feature type="binding site" evidence="1">
    <location>
        <position position="366"/>
    </location>
    <ligand>
        <name>Zn(2+)</name>
        <dbReference type="ChEBI" id="CHEBI:29105"/>
        <label>1</label>
    </ligand>
</feature>
<feature type="modified residue" description="N6-carboxylysine" evidence="1">
    <location>
        <position position="195"/>
    </location>
</feature>
<feature type="sequence conflict" description="In Ref. 4; AAM63760." evidence="6" ref="4">
    <original>G</original>
    <variation>R</variation>
    <location>
        <position position="426"/>
    </location>
</feature>
<reference key="1">
    <citation type="journal article" date="1999" name="Nature">
        <title>Sequence and analysis of chromosome 4 of the plant Arabidopsis thaliana.</title>
        <authorList>
            <person name="Mayer K.F.X."/>
            <person name="Schueller C."/>
            <person name="Wambutt R."/>
            <person name="Murphy G."/>
            <person name="Volckaert G."/>
            <person name="Pohl T."/>
            <person name="Duesterhoeft A."/>
            <person name="Stiekema W."/>
            <person name="Entian K.-D."/>
            <person name="Terryn N."/>
            <person name="Harris B."/>
            <person name="Ansorge W."/>
            <person name="Brandt P."/>
            <person name="Grivell L.A."/>
            <person name="Rieger M."/>
            <person name="Weichselgartner M."/>
            <person name="de Simone V."/>
            <person name="Obermaier B."/>
            <person name="Mache R."/>
            <person name="Mueller M."/>
            <person name="Kreis M."/>
            <person name="Delseny M."/>
            <person name="Puigdomenech P."/>
            <person name="Watson M."/>
            <person name="Schmidtheini T."/>
            <person name="Reichert B."/>
            <person name="Portetelle D."/>
            <person name="Perez-Alonso M."/>
            <person name="Boutry M."/>
            <person name="Bancroft I."/>
            <person name="Vos P."/>
            <person name="Hoheisel J."/>
            <person name="Zimmermann W."/>
            <person name="Wedler H."/>
            <person name="Ridley P."/>
            <person name="Langham S.-A."/>
            <person name="McCullagh B."/>
            <person name="Bilham L."/>
            <person name="Robben J."/>
            <person name="van der Schueren J."/>
            <person name="Grymonprez B."/>
            <person name="Chuang Y.-J."/>
            <person name="Vandenbussche F."/>
            <person name="Braeken M."/>
            <person name="Weltjens I."/>
            <person name="Voet M."/>
            <person name="Bastiaens I."/>
            <person name="Aert R."/>
            <person name="Defoor E."/>
            <person name="Weitzenegger T."/>
            <person name="Bothe G."/>
            <person name="Ramsperger U."/>
            <person name="Hilbert H."/>
            <person name="Braun M."/>
            <person name="Holzer E."/>
            <person name="Brandt A."/>
            <person name="Peters S."/>
            <person name="van Staveren M."/>
            <person name="Dirkse W."/>
            <person name="Mooijman P."/>
            <person name="Klein Lankhorst R."/>
            <person name="Rose M."/>
            <person name="Hauf J."/>
            <person name="Koetter P."/>
            <person name="Berneiser S."/>
            <person name="Hempel S."/>
            <person name="Feldpausch M."/>
            <person name="Lamberth S."/>
            <person name="Van den Daele H."/>
            <person name="De Keyser A."/>
            <person name="Buysshaert C."/>
            <person name="Gielen J."/>
            <person name="Villarroel R."/>
            <person name="De Clercq R."/>
            <person name="van Montagu M."/>
            <person name="Rogers J."/>
            <person name="Cronin A."/>
            <person name="Quail M.A."/>
            <person name="Bray-Allen S."/>
            <person name="Clark L."/>
            <person name="Doggett J."/>
            <person name="Hall S."/>
            <person name="Kay M."/>
            <person name="Lennard N."/>
            <person name="McLay K."/>
            <person name="Mayes R."/>
            <person name="Pettett A."/>
            <person name="Rajandream M.A."/>
            <person name="Lyne M."/>
            <person name="Benes V."/>
            <person name="Rechmann S."/>
            <person name="Borkova D."/>
            <person name="Bloecker H."/>
            <person name="Scharfe M."/>
            <person name="Grimm M."/>
            <person name="Loehnert T.-H."/>
            <person name="Dose S."/>
            <person name="de Haan M."/>
            <person name="Maarse A.C."/>
            <person name="Schaefer M."/>
            <person name="Mueller-Auer S."/>
            <person name="Gabel C."/>
            <person name="Fuchs M."/>
            <person name="Fartmann B."/>
            <person name="Granderath K."/>
            <person name="Dauner D."/>
            <person name="Herzl A."/>
            <person name="Neumann S."/>
            <person name="Argiriou A."/>
            <person name="Vitale D."/>
            <person name="Liguori R."/>
            <person name="Piravandi E."/>
            <person name="Massenet O."/>
            <person name="Quigley F."/>
            <person name="Clabauld G."/>
            <person name="Muendlein A."/>
            <person name="Felber R."/>
            <person name="Schnabl S."/>
            <person name="Hiller R."/>
            <person name="Schmidt W."/>
            <person name="Lecharny A."/>
            <person name="Aubourg S."/>
            <person name="Chefdor F."/>
            <person name="Cooke R."/>
            <person name="Berger C."/>
            <person name="Monfort A."/>
            <person name="Casacuberta E."/>
            <person name="Gibbons T."/>
            <person name="Weber N."/>
            <person name="Vandenbol M."/>
            <person name="Bargues M."/>
            <person name="Terol J."/>
            <person name="Torres A."/>
            <person name="Perez-Perez A."/>
            <person name="Purnelle B."/>
            <person name="Bent E."/>
            <person name="Johnson S."/>
            <person name="Tacon D."/>
            <person name="Jesse T."/>
            <person name="Heijnen L."/>
            <person name="Schwarz S."/>
            <person name="Scholler P."/>
            <person name="Heber S."/>
            <person name="Francs P."/>
            <person name="Bielke C."/>
            <person name="Frishman D."/>
            <person name="Haase D."/>
            <person name="Lemcke K."/>
            <person name="Mewes H.-W."/>
            <person name="Stocker S."/>
            <person name="Zaccaria P."/>
            <person name="Bevan M."/>
            <person name="Wilson R.K."/>
            <person name="de la Bastide M."/>
            <person name="Habermann K."/>
            <person name="Parnell L."/>
            <person name="Dedhia N."/>
            <person name="Gnoj L."/>
            <person name="Schutz K."/>
            <person name="Huang E."/>
            <person name="Spiegel L."/>
            <person name="Sekhon M."/>
            <person name="Murray J."/>
            <person name="Sheet P."/>
            <person name="Cordes M."/>
            <person name="Abu-Threideh J."/>
            <person name="Stoneking T."/>
            <person name="Kalicki J."/>
            <person name="Graves T."/>
            <person name="Harmon G."/>
            <person name="Edwards J."/>
            <person name="Latreille P."/>
            <person name="Courtney L."/>
            <person name="Cloud J."/>
            <person name="Abbott A."/>
            <person name="Scott K."/>
            <person name="Johnson D."/>
            <person name="Minx P."/>
            <person name="Bentley D."/>
            <person name="Fulton B."/>
            <person name="Miller N."/>
            <person name="Greco T."/>
            <person name="Kemp K."/>
            <person name="Kramer J."/>
            <person name="Fulton L."/>
            <person name="Mardis E."/>
            <person name="Dante M."/>
            <person name="Pepin K."/>
            <person name="Hillier L.W."/>
            <person name="Nelson J."/>
            <person name="Spieth J."/>
            <person name="Ryan E."/>
            <person name="Andrews S."/>
            <person name="Geisel C."/>
            <person name="Layman D."/>
            <person name="Du H."/>
            <person name="Ali J."/>
            <person name="Berghoff A."/>
            <person name="Jones K."/>
            <person name="Drone K."/>
            <person name="Cotton M."/>
            <person name="Joshu C."/>
            <person name="Antonoiu B."/>
            <person name="Zidanic M."/>
            <person name="Strong C."/>
            <person name="Sun H."/>
            <person name="Lamar B."/>
            <person name="Yordan C."/>
            <person name="Ma P."/>
            <person name="Zhong J."/>
            <person name="Preston R."/>
            <person name="Vil D."/>
            <person name="Shekher M."/>
            <person name="Matero A."/>
            <person name="Shah R."/>
            <person name="Swaby I.K."/>
            <person name="O'Shaughnessy A."/>
            <person name="Rodriguez M."/>
            <person name="Hoffman J."/>
            <person name="Till S."/>
            <person name="Granat S."/>
            <person name="Shohdy N."/>
            <person name="Hasegawa A."/>
            <person name="Hameed A."/>
            <person name="Lodhi M."/>
            <person name="Johnson A."/>
            <person name="Chen E."/>
            <person name="Marra M.A."/>
            <person name="Martienssen R."/>
            <person name="McCombie W.R."/>
        </authorList>
    </citation>
    <scope>NUCLEOTIDE SEQUENCE [LARGE SCALE GENOMIC DNA]</scope>
    <source>
        <strain>cv. Columbia</strain>
    </source>
</reference>
<reference key="2">
    <citation type="journal article" date="2017" name="Plant J.">
        <title>Araport11: a complete reannotation of the Arabidopsis thaliana reference genome.</title>
        <authorList>
            <person name="Cheng C.Y."/>
            <person name="Krishnakumar V."/>
            <person name="Chan A.P."/>
            <person name="Thibaud-Nissen F."/>
            <person name="Schobel S."/>
            <person name="Town C.D."/>
        </authorList>
    </citation>
    <scope>GENOME REANNOTATION</scope>
    <source>
        <strain>cv. Columbia</strain>
    </source>
</reference>
<reference key="3">
    <citation type="journal article" date="2003" name="Science">
        <title>Empirical analysis of transcriptional activity in the Arabidopsis genome.</title>
        <authorList>
            <person name="Yamada K."/>
            <person name="Lim J."/>
            <person name="Dale J.M."/>
            <person name="Chen H."/>
            <person name="Shinn P."/>
            <person name="Palm C.J."/>
            <person name="Southwick A.M."/>
            <person name="Wu H.C."/>
            <person name="Kim C.J."/>
            <person name="Nguyen M."/>
            <person name="Pham P.K."/>
            <person name="Cheuk R.F."/>
            <person name="Karlin-Newmann G."/>
            <person name="Liu S.X."/>
            <person name="Lam B."/>
            <person name="Sakano H."/>
            <person name="Wu T."/>
            <person name="Yu G."/>
            <person name="Miranda M."/>
            <person name="Quach H.L."/>
            <person name="Tripp M."/>
            <person name="Chang C.H."/>
            <person name="Lee J.M."/>
            <person name="Toriumi M.J."/>
            <person name="Chan M.M."/>
            <person name="Tang C.C."/>
            <person name="Onodera C.S."/>
            <person name="Deng J.M."/>
            <person name="Akiyama K."/>
            <person name="Ansari Y."/>
            <person name="Arakawa T."/>
            <person name="Banh J."/>
            <person name="Banno F."/>
            <person name="Bowser L."/>
            <person name="Brooks S.Y."/>
            <person name="Carninci P."/>
            <person name="Chao Q."/>
            <person name="Choy N."/>
            <person name="Enju A."/>
            <person name="Goldsmith A.D."/>
            <person name="Gurjal M."/>
            <person name="Hansen N.F."/>
            <person name="Hayashizaki Y."/>
            <person name="Johnson-Hopson C."/>
            <person name="Hsuan V.W."/>
            <person name="Iida K."/>
            <person name="Karnes M."/>
            <person name="Khan S."/>
            <person name="Koesema E."/>
            <person name="Ishida J."/>
            <person name="Jiang P.X."/>
            <person name="Jones T."/>
            <person name="Kawai J."/>
            <person name="Kamiya A."/>
            <person name="Meyers C."/>
            <person name="Nakajima M."/>
            <person name="Narusaka M."/>
            <person name="Seki M."/>
            <person name="Sakurai T."/>
            <person name="Satou M."/>
            <person name="Tamse R."/>
            <person name="Vaysberg M."/>
            <person name="Wallender E.K."/>
            <person name="Wong C."/>
            <person name="Yamamura Y."/>
            <person name="Yuan S."/>
            <person name="Shinozaki K."/>
            <person name="Davis R.W."/>
            <person name="Theologis A."/>
            <person name="Ecker J.R."/>
        </authorList>
    </citation>
    <scope>NUCLEOTIDE SEQUENCE [LARGE SCALE MRNA]</scope>
    <source>
        <strain>cv. Columbia</strain>
    </source>
</reference>
<reference key="4">
    <citation type="submission" date="2002-03" db="EMBL/GenBank/DDBJ databases">
        <title>Full-length cDNA from Arabidopsis thaliana.</title>
        <authorList>
            <person name="Brover V.V."/>
            <person name="Troukhan M.E."/>
            <person name="Alexandrov N.A."/>
            <person name="Lu Y.-P."/>
            <person name="Flavell R.B."/>
            <person name="Feldmann K.A."/>
        </authorList>
    </citation>
    <scope>NUCLEOTIDE SEQUENCE [LARGE SCALE MRNA]</scope>
</reference>
<reference key="5">
    <citation type="journal article" date="2004" name="Plant Physiol.">
        <title>Functional characterization of allantoinase genes from Arabidopsis and a nonureide-type legume black locust.</title>
        <authorList>
            <person name="Yang J."/>
            <person name="Han K.H."/>
        </authorList>
    </citation>
    <scope>FUNCTION</scope>
</reference>
<reference key="6">
    <citation type="journal article" date="2006" name="Planta">
        <title>AtAAH encodes a protein with allantoate amidohydrolase activity from Arabidopsis thaliana.</title>
        <authorList>
            <person name="Todd C.D."/>
            <person name="Polacco J.C."/>
        </authorList>
    </citation>
    <scope>FUNCTION</scope>
    <scope>DISRUPTION PHENOTYPE</scope>
</reference>
<reference key="7">
    <citation type="journal article" date="2013" name="Plant Physiol.">
        <title>The ureide-degrading reactions of purine ring catabolism employ three amidohydrolases and one aminohydrolase in Arabidopsis, soybean, and rice.</title>
        <authorList>
            <person name="Werner A.K."/>
            <person name="Medina-Escobar N."/>
            <person name="Zulawski M."/>
            <person name="Sparkes I.A."/>
            <person name="Cao F.Q."/>
            <person name="Witte C.P."/>
        </authorList>
    </citation>
    <scope>FUNCTION</scope>
    <scope>CATALYTIC ACTIVITY</scope>
    <scope>BIOPHYSICOCHEMICAL PROPERTIES</scope>
    <scope>DISRUPTION PHENOTYPE</scope>
</reference>
<reference key="8">
    <citation type="journal article" date="2014" name="Plant Cell Environ.">
        <title>The purine metabolite allantoin enhances abiotic stress tolerance through synergistic activation of abscisic acid metabolism.</title>
        <authorList>
            <person name="Watanabe S."/>
            <person name="Matsumoto M."/>
            <person name="Hakomori Y."/>
            <person name="Takagi H."/>
            <person name="Shimada H."/>
            <person name="Sakamoto A."/>
        </authorList>
    </citation>
    <scope>DISRUPTION PHENOTYPE</scope>
</reference>
<name>ALN_ARATH</name>
<proteinExistence type="evidence at protein level"/>
<organism>
    <name type="scientific">Arabidopsis thaliana</name>
    <name type="common">Mouse-ear cress</name>
    <dbReference type="NCBI Taxonomy" id="3702"/>
    <lineage>
        <taxon>Eukaryota</taxon>
        <taxon>Viridiplantae</taxon>
        <taxon>Streptophyta</taxon>
        <taxon>Embryophyta</taxon>
        <taxon>Tracheophyta</taxon>
        <taxon>Spermatophyta</taxon>
        <taxon>Magnoliopsida</taxon>
        <taxon>eudicotyledons</taxon>
        <taxon>Gunneridae</taxon>
        <taxon>Pentapetalae</taxon>
        <taxon>rosids</taxon>
        <taxon>malvids</taxon>
        <taxon>Brassicales</taxon>
        <taxon>Brassicaceae</taxon>
        <taxon>Camelineae</taxon>
        <taxon>Arabidopsis</taxon>
    </lineage>
</organism>
<protein>
    <recommendedName>
        <fullName>Allantoinase</fullName>
        <shortName>AtALN</shortName>
        <ecNumber>3.5.2.5</ecNumber>
    </recommendedName>
</protein>
<dbReference type="EC" id="3.5.2.5"/>
<dbReference type="EMBL" id="AF128393">
    <property type="status" value="NOT_ANNOTATED_CDS"/>
    <property type="molecule type" value="Genomic_DNA"/>
</dbReference>
<dbReference type="EMBL" id="CP002687">
    <property type="protein sequence ID" value="AEE82448.1"/>
    <property type="molecule type" value="Genomic_DNA"/>
</dbReference>
<dbReference type="EMBL" id="AY045901">
    <property type="protein sequence ID" value="AAK76575.1"/>
    <property type="molecule type" value="mRNA"/>
</dbReference>
<dbReference type="EMBL" id="AY113948">
    <property type="protein sequence ID" value="AAM44996.1"/>
    <property type="molecule type" value="mRNA"/>
</dbReference>
<dbReference type="EMBL" id="AY086706">
    <property type="protein sequence ID" value="AAM63760.1"/>
    <property type="molecule type" value="mRNA"/>
</dbReference>
<dbReference type="RefSeq" id="NP_567276.1">
    <property type="nucleotide sequence ID" value="NM_116734.3"/>
</dbReference>
<dbReference type="SMR" id="Q94AP0"/>
<dbReference type="FunCoup" id="Q94AP0">
    <property type="interactions" value="11"/>
</dbReference>
<dbReference type="STRING" id="3702.Q94AP0"/>
<dbReference type="GlyGen" id="Q94AP0">
    <property type="glycosylation" value="1 site"/>
</dbReference>
<dbReference type="PaxDb" id="3702-AT4G04955.1"/>
<dbReference type="ProteomicsDB" id="244970"/>
<dbReference type="EnsemblPlants" id="AT4G04955.1">
    <property type="protein sequence ID" value="AT4G04955.1"/>
    <property type="gene ID" value="AT4G04955"/>
</dbReference>
<dbReference type="GeneID" id="825836"/>
<dbReference type="Gramene" id="AT4G04955.1">
    <property type="protein sequence ID" value="AT4G04955.1"/>
    <property type="gene ID" value="AT4G04955"/>
</dbReference>
<dbReference type="KEGG" id="ath:AT4G04955"/>
<dbReference type="Araport" id="AT4G04955"/>
<dbReference type="TAIR" id="AT4G04955">
    <property type="gene designation" value="ALN"/>
</dbReference>
<dbReference type="eggNOG" id="KOG2584">
    <property type="taxonomic scope" value="Eukaryota"/>
</dbReference>
<dbReference type="HOGENOM" id="CLU_015572_4_1_1"/>
<dbReference type="InParanoid" id="Q94AP0"/>
<dbReference type="OMA" id="SRLHVCH"/>
<dbReference type="PhylomeDB" id="Q94AP0"/>
<dbReference type="BioCyc" id="ARA:AT4G04955-MONOMER"/>
<dbReference type="BRENDA" id="3.5.2.5">
    <property type="organism ID" value="399"/>
</dbReference>
<dbReference type="SABIO-RK" id="Q94AP0"/>
<dbReference type="UniPathway" id="UPA00395">
    <property type="reaction ID" value="UER00653"/>
</dbReference>
<dbReference type="PRO" id="PR:Q94AP0"/>
<dbReference type="Proteomes" id="UP000006548">
    <property type="component" value="Chromosome 4"/>
</dbReference>
<dbReference type="ExpressionAtlas" id="Q94AP0">
    <property type="expression patterns" value="baseline and differential"/>
</dbReference>
<dbReference type="GO" id="GO:0005783">
    <property type="term" value="C:endoplasmic reticulum"/>
    <property type="evidence" value="ECO:0000314"/>
    <property type="project" value="TAIR"/>
</dbReference>
<dbReference type="GO" id="GO:0004038">
    <property type="term" value="F:allantoinase activity"/>
    <property type="evidence" value="ECO:0000314"/>
    <property type="project" value="TAIR"/>
</dbReference>
<dbReference type="GO" id="GO:0050897">
    <property type="term" value="F:cobalt ion binding"/>
    <property type="evidence" value="ECO:0007669"/>
    <property type="project" value="InterPro"/>
</dbReference>
<dbReference type="GO" id="GO:0008270">
    <property type="term" value="F:zinc ion binding"/>
    <property type="evidence" value="ECO:0007669"/>
    <property type="project" value="InterPro"/>
</dbReference>
<dbReference type="GO" id="GO:0000256">
    <property type="term" value="P:allantoin catabolic process"/>
    <property type="evidence" value="ECO:0007669"/>
    <property type="project" value="UniProtKB-UniPathway"/>
</dbReference>
<dbReference type="GO" id="GO:0006995">
    <property type="term" value="P:cellular response to nitrogen starvation"/>
    <property type="evidence" value="ECO:0000270"/>
    <property type="project" value="TAIR"/>
</dbReference>
<dbReference type="GO" id="GO:0006145">
    <property type="term" value="P:purine nucleobase catabolic process"/>
    <property type="evidence" value="ECO:0000315"/>
    <property type="project" value="TAIR"/>
</dbReference>
<dbReference type="GO" id="GO:0010136">
    <property type="term" value="P:ureide catabolic process"/>
    <property type="evidence" value="ECO:0000315"/>
    <property type="project" value="TAIR"/>
</dbReference>
<dbReference type="CDD" id="cd01315">
    <property type="entry name" value="L-HYD_ALN"/>
    <property type="match status" value="1"/>
</dbReference>
<dbReference type="FunFam" id="3.20.20.140:FF:000032">
    <property type="entry name" value="Allantoinase Dal1"/>
    <property type="match status" value="1"/>
</dbReference>
<dbReference type="Gene3D" id="3.20.20.140">
    <property type="entry name" value="Metal-dependent hydrolases"/>
    <property type="match status" value="1"/>
</dbReference>
<dbReference type="InterPro" id="IPR017593">
    <property type="entry name" value="Allantoinase"/>
</dbReference>
<dbReference type="InterPro" id="IPR056854">
    <property type="entry name" value="ALN_composite"/>
</dbReference>
<dbReference type="InterPro" id="IPR006680">
    <property type="entry name" value="Amidohydro-rel"/>
</dbReference>
<dbReference type="InterPro" id="IPR050138">
    <property type="entry name" value="DHOase/Allantoinase_Hydrolase"/>
</dbReference>
<dbReference type="InterPro" id="IPR011059">
    <property type="entry name" value="Metal-dep_hydrolase_composite"/>
</dbReference>
<dbReference type="InterPro" id="IPR032466">
    <property type="entry name" value="Metal_Hydrolase"/>
</dbReference>
<dbReference type="NCBIfam" id="TIGR03178">
    <property type="entry name" value="allantoinase"/>
    <property type="match status" value="1"/>
</dbReference>
<dbReference type="PANTHER" id="PTHR43668">
    <property type="entry name" value="ALLANTOINASE"/>
    <property type="match status" value="1"/>
</dbReference>
<dbReference type="PANTHER" id="PTHR43668:SF2">
    <property type="entry name" value="ALLANTOINASE"/>
    <property type="match status" value="1"/>
</dbReference>
<dbReference type="Pfam" id="PF24890">
    <property type="entry name" value="ALN_composite"/>
    <property type="match status" value="1"/>
</dbReference>
<dbReference type="Pfam" id="PF01979">
    <property type="entry name" value="Amidohydro_1"/>
    <property type="match status" value="1"/>
</dbReference>
<dbReference type="SUPFAM" id="SSF51338">
    <property type="entry name" value="Composite domain of metallo-dependent hydrolases"/>
    <property type="match status" value="1"/>
</dbReference>
<dbReference type="SUPFAM" id="SSF51556">
    <property type="entry name" value="Metallo-dependent hydrolases"/>
    <property type="match status" value="1"/>
</dbReference>
<keyword id="KW-0378">Hydrolase</keyword>
<keyword id="KW-0479">Metal-binding</keyword>
<keyword id="KW-0659">Purine metabolism</keyword>
<keyword id="KW-1185">Reference proteome</keyword>
<keyword id="KW-0862">Zinc</keyword>
<accession>Q94AP0</accession>
<accession>Q8LCA4</accession>
<gene>
    <name type="primary">ALN</name>
    <name type="ordered locus">At4g04955</name>
    <name type="ORF">T1J1</name>
</gene>
<sequence>MERTLLQWRLLPLLALIVALFSFFFASPRSLQGNNKCSLLPHDHYWISSKRIVTPNGLISGSVEVKGGIIVSVVKEVDWHKSQRSRVKVIDYGEAVLMPGLIDVHVHLDDPGRSEWEGFPSGTKAAAAGGITTLVDMPLNSFPSTVSPETLKLKIEAAKNRIHVDVGFWGGLVPDNALNSSALESLLDAGVLGLKSFMCPSGINDFPMTNITHIKEGLSVLAKYKRPLLVHAEIERDLEIEDGSENDPRSYLTYLKTRPTSWEEGAIRNLLSVTENTRIGGSAEGAHLHIVHLSDASSSLDLIKEAKGKGDSVTVETCPHYLAFSAEEIPEGDTRFKCSPPIRDAANREKLWEALMEGDIDMLSSDHSPTKPELKLMSDGNFLKAWGGISSLQFVLPITWSYGKKYGVTLEQVTSWWSDRPSKLAGLHSKGAVTVGKHADLVVWEPEAEFDVDEDHPIHFKHPSISAYLGRRLSGKVVSTFVRGNLVFGEGKHASDACGSLQLATT</sequence>
<evidence type="ECO:0000250" key="1"/>
<evidence type="ECO:0000269" key="2">
    <source>
    </source>
</evidence>
<evidence type="ECO:0000269" key="3">
    <source>
    </source>
</evidence>
<evidence type="ECO:0000269" key="4">
    <source>
    </source>
</evidence>
<evidence type="ECO:0000269" key="5">
    <source>
    </source>
</evidence>
<evidence type="ECO:0000305" key="6"/>
<evidence type="ECO:0000305" key="7">
    <source>
    </source>
</evidence>